<dbReference type="EMBL" id="CP000253">
    <property type="protein sequence ID" value="ABD30921.1"/>
    <property type="molecule type" value="Genomic_DNA"/>
</dbReference>
<dbReference type="RefSeq" id="WP_000383814.1">
    <property type="nucleotide sequence ID" value="NZ_LS483365.1"/>
</dbReference>
<dbReference type="RefSeq" id="YP_500359.1">
    <property type="nucleotide sequence ID" value="NC_007795.1"/>
</dbReference>
<dbReference type="SMR" id="Q2G247"/>
<dbReference type="STRING" id="93061.SAOUHSC_01855"/>
<dbReference type="PaxDb" id="1280-SAXN108_1769"/>
<dbReference type="GeneID" id="3920533"/>
<dbReference type="KEGG" id="sao:SAOUHSC_01855"/>
<dbReference type="PATRIC" id="fig|93061.5.peg.1688"/>
<dbReference type="eggNOG" id="COG4768">
    <property type="taxonomic scope" value="Bacteria"/>
</dbReference>
<dbReference type="HOGENOM" id="CLU_115870_0_0_9"/>
<dbReference type="OrthoDB" id="2366030at2"/>
<dbReference type="PRO" id="PR:Q2G247"/>
<dbReference type="Proteomes" id="UP000008816">
    <property type="component" value="Chromosome"/>
</dbReference>
<dbReference type="GO" id="GO:0005886">
    <property type="term" value="C:plasma membrane"/>
    <property type="evidence" value="ECO:0007669"/>
    <property type="project" value="UniProtKB-SubCell"/>
</dbReference>
<dbReference type="Gene3D" id="1.10.287.950">
    <property type="entry name" value="Methyl-accepting chemotaxis protein"/>
    <property type="match status" value="1"/>
</dbReference>
<dbReference type="InterPro" id="IPR009293">
    <property type="entry name" value="UPF0478"/>
</dbReference>
<dbReference type="PANTHER" id="PTHR40070">
    <property type="entry name" value="UPF0478 PROTEIN YTXG"/>
    <property type="match status" value="1"/>
</dbReference>
<dbReference type="PANTHER" id="PTHR40070:SF1">
    <property type="entry name" value="UPF0478 PROTEIN YTXG"/>
    <property type="match status" value="1"/>
</dbReference>
<dbReference type="Pfam" id="PF06103">
    <property type="entry name" value="DUF948"/>
    <property type="match status" value="1"/>
</dbReference>
<dbReference type="SUPFAM" id="SSF58104">
    <property type="entry name" value="Methyl-accepting chemotaxis protein (MCP) signaling domain"/>
    <property type="match status" value="1"/>
</dbReference>
<proteinExistence type="inferred from homology"/>
<gene>
    <name type="ordered locus">SAOUHSC_01855</name>
</gene>
<feature type="chain" id="PRO_0000299433" description="UPF0478 protein SAOUHSC_01855">
    <location>
        <begin position="1"/>
        <end position="163"/>
    </location>
</feature>
<feature type="transmembrane region" description="Helical" evidence="1">
    <location>
        <begin position="7"/>
        <end position="27"/>
    </location>
</feature>
<comment type="subcellular location">
    <subcellularLocation>
        <location evidence="2">Cell membrane</location>
        <topology evidence="2">Single-pass membrane protein</topology>
    </subcellularLocation>
</comment>
<comment type="similarity">
    <text evidence="2">Belongs to the UPF0478 family.</text>
</comment>
<reference key="1">
    <citation type="book" date="2006" name="Gram positive pathogens, 2nd edition">
        <title>The Staphylococcus aureus NCTC 8325 genome.</title>
        <editorList>
            <person name="Fischetti V."/>
            <person name="Novick R."/>
            <person name="Ferretti J."/>
            <person name="Portnoy D."/>
            <person name="Rood J."/>
        </editorList>
        <authorList>
            <person name="Gillaspy A.F."/>
            <person name="Worrell V."/>
            <person name="Orvis J."/>
            <person name="Roe B.A."/>
            <person name="Dyer D.W."/>
            <person name="Iandolo J.J."/>
        </authorList>
    </citation>
    <scope>NUCLEOTIDE SEQUENCE [LARGE SCALE GENOMIC DNA]</scope>
    <source>
        <strain>NCTC 8325 / PS 47</strain>
    </source>
</reference>
<protein>
    <recommendedName>
        <fullName>UPF0478 protein SAOUHSC_01855</fullName>
    </recommendedName>
</protein>
<accession>Q2G247</accession>
<keyword id="KW-1003">Cell membrane</keyword>
<keyword id="KW-0472">Membrane</keyword>
<keyword id="KW-1185">Reference proteome</keyword>
<keyword id="KW-0812">Transmembrane</keyword>
<keyword id="KW-1133">Transmembrane helix</keyword>
<organism>
    <name type="scientific">Staphylococcus aureus (strain NCTC 8325 / PS 47)</name>
    <dbReference type="NCBI Taxonomy" id="93061"/>
    <lineage>
        <taxon>Bacteria</taxon>
        <taxon>Bacillati</taxon>
        <taxon>Bacillota</taxon>
        <taxon>Bacilli</taxon>
        <taxon>Bacillales</taxon>
        <taxon>Staphylococcaceae</taxon>
        <taxon>Staphylococcus</taxon>
    </lineage>
</organism>
<evidence type="ECO:0000255" key="1"/>
<evidence type="ECO:0000305" key="2"/>
<name>Y1855_STAA8</name>
<sequence>MDWILPIAGIIAAIAFLILCIGIVAVLNSVKKNLDYVAKTLDGVEGQVQGITRETTDLLHKVNRLTEDIQGKVDRLNSVVDAVKGIGDSVQTLNSSVDRVTNSITHNISQNEDKISQVVQWSNVAMEIADKWQNRHYRRGSANYKANNVATDANHSYTSRVDK</sequence>